<gene>
    <name evidence="1" type="primary">rpmE</name>
    <name type="ordered locus">Avi_3665</name>
</gene>
<organism>
    <name type="scientific">Allorhizobium ampelinum (strain ATCC BAA-846 / DSM 112012 / S4)</name>
    <name type="common">Agrobacterium vitis (strain S4)</name>
    <dbReference type="NCBI Taxonomy" id="311402"/>
    <lineage>
        <taxon>Bacteria</taxon>
        <taxon>Pseudomonadati</taxon>
        <taxon>Pseudomonadota</taxon>
        <taxon>Alphaproteobacteria</taxon>
        <taxon>Hyphomicrobiales</taxon>
        <taxon>Rhizobiaceae</taxon>
        <taxon>Rhizobium/Agrobacterium group</taxon>
        <taxon>Allorhizobium</taxon>
        <taxon>Allorhizobium ampelinum</taxon>
    </lineage>
</organism>
<name>RL31_ALLAM</name>
<comment type="function">
    <text evidence="1">Binds the 23S rRNA.</text>
</comment>
<comment type="subunit">
    <text evidence="1">Part of the 50S ribosomal subunit.</text>
</comment>
<comment type="similarity">
    <text evidence="1">Belongs to the bacterial ribosomal protein bL31 family. Type A subfamily.</text>
</comment>
<keyword id="KW-1185">Reference proteome</keyword>
<keyword id="KW-0687">Ribonucleoprotein</keyword>
<keyword id="KW-0689">Ribosomal protein</keyword>
<keyword id="KW-0694">RNA-binding</keyword>
<keyword id="KW-0699">rRNA-binding</keyword>
<accession>B9JS08</accession>
<proteinExistence type="inferred from homology"/>
<evidence type="ECO:0000255" key="1">
    <source>
        <dbReference type="HAMAP-Rule" id="MF_00501"/>
    </source>
</evidence>
<evidence type="ECO:0000305" key="2"/>
<dbReference type="EMBL" id="CP000633">
    <property type="protein sequence ID" value="ACM37636.1"/>
    <property type="molecule type" value="Genomic_DNA"/>
</dbReference>
<dbReference type="RefSeq" id="WP_015917049.1">
    <property type="nucleotide sequence ID" value="NC_011989.1"/>
</dbReference>
<dbReference type="SMR" id="B9JS08"/>
<dbReference type="STRING" id="311402.Avi_3665"/>
<dbReference type="GeneID" id="60683192"/>
<dbReference type="KEGG" id="avi:Avi_3665"/>
<dbReference type="eggNOG" id="COG0254">
    <property type="taxonomic scope" value="Bacteria"/>
</dbReference>
<dbReference type="HOGENOM" id="CLU_114306_3_2_5"/>
<dbReference type="Proteomes" id="UP000001596">
    <property type="component" value="Chromosome 1"/>
</dbReference>
<dbReference type="GO" id="GO:1990904">
    <property type="term" value="C:ribonucleoprotein complex"/>
    <property type="evidence" value="ECO:0007669"/>
    <property type="project" value="UniProtKB-KW"/>
</dbReference>
<dbReference type="GO" id="GO:0005840">
    <property type="term" value="C:ribosome"/>
    <property type="evidence" value="ECO:0007669"/>
    <property type="project" value="UniProtKB-KW"/>
</dbReference>
<dbReference type="GO" id="GO:0019843">
    <property type="term" value="F:rRNA binding"/>
    <property type="evidence" value="ECO:0007669"/>
    <property type="project" value="UniProtKB-KW"/>
</dbReference>
<dbReference type="GO" id="GO:0003735">
    <property type="term" value="F:structural constituent of ribosome"/>
    <property type="evidence" value="ECO:0007669"/>
    <property type="project" value="InterPro"/>
</dbReference>
<dbReference type="GO" id="GO:0006412">
    <property type="term" value="P:translation"/>
    <property type="evidence" value="ECO:0007669"/>
    <property type="project" value="UniProtKB-UniRule"/>
</dbReference>
<dbReference type="Gene3D" id="4.10.830.30">
    <property type="entry name" value="Ribosomal protein L31"/>
    <property type="match status" value="1"/>
</dbReference>
<dbReference type="HAMAP" id="MF_00501">
    <property type="entry name" value="Ribosomal_bL31_1"/>
    <property type="match status" value="1"/>
</dbReference>
<dbReference type="InterPro" id="IPR034704">
    <property type="entry name" value="Ribosomal_bL28/bL31-like_sf"/>
</dbReference>
<dbReference type="InterPro" id="IPR002150">
    <property type="entry name" value="Ribosomal_bL31"/>
</dbReference>
<dbReference type="InterPro" id="IPR027491">
    <property type="entry name" value="Ribosomal_bL31_A"/>
</dbReference>
<dbReference type="InterPro" id="IPR042105">
    <property type="entry name" value="Ribosomal_bL31_sf"/>
</dbReference>
<dbReference type="NCBIfam" id="TIGR00105">
    <property type="entry name" value="L31"/>
    <property type="match status" value="1"/>
</dbReference>
<dbReference type="NCBIfam" id="NF001809">
    <property type="entry name" value="PRK00528.1"/>
    <property type="match status" value="1"/>
</dbReference>
<dbReference type="PANTHER" id="PTHR33280">
    <property type="entry name" value="50S RIBOSOMAL PROTEIN L31, CHLOROPLASTIC"/>
    <property type="match status" value="1"/>
</dbReference>
<dbReference type="PANTHER" id="PTHR33280:SF6">
    <property type="entry name" value="LARGE RIBOSOMAL SUBUNIT PROTEIN BL31A"/>
    <property type="match status" value="1"/>
</dbReference>
<dbReference type="Pfam" id="PF01197">
    <property type="entry name" value="Ribosomal_L31"/>
    <property type="match status" value="1"/>
</dbReference>
<dbReference type="PRINTS" id="PR01249">
    <property type="entry name" value="RIBOSOMALL31"/>
</dbReference>
<dbReference type="SUPFAM" id="SSF143800">
    <property type="entry name" value="L28p-like"/>
    <property type="match status" value="1"/>
</dbReference>
<dbReference type="PROSITE" id="PS01143">
    <property type="entry name" value="RIBOSOMAL_L31"/>
    <property type="match status" value="1"/>
</dbReference>
<feature type="chain" id="PRO_1000176945" description="Large ribosomal subunit protein bL31">
    <location>
        <begin position="1"/>
        <end position="73"/>
    </location>
</feature>
<sequence length="73" mass="8214">MKANIHPEYHKIKVVMTDGTEYETFSTWGTEGQVMNLDIDSKSHPAWTGGNQQLMDRGGRLSKFNKRFGGLGL</sequence>
<protein>
    <recommendedName>
        <fullName evidence="1">Large ribosomal subunit protein bL31</fullName>
    </recommendedName>
    <alternativeName>
        <fullName evidence="2">50S ribosomal protein L31</fullName>
    </alternativeName>
</protein>
<reference key="1">
    <citation type="journal article" date="2009" name="J. Bacteriol.">
        <title>Genome sequences of three Agrobacterium biovars help elucidate the evolution of multichromosome genomes in bacteria.</title>
        <authorList>
            <person name="Slater S.C."/>
            <person name="Goldman B.S."/>
            <person name="Goodner B."/>
            <person name="Setubal J.C."/>
            <person name="Farrand S.K."/>
            <person name="Nester E.W."/>
            <person name="Burr T.J."/>
            <person name="Banta L."/>
            <person name="Dickerman A.W."/>
            <person name="Paulsen I."/>
            <person name="Otten L."/>
            <person name="Suen G."/>
            <person name="Welch R."/>
            <person name="Almeida N.F."/>
            <person name="Arnold F."/>
            <person name="Burton O.T."/>
            <person name="Du Z."/>
            <person name="Ewing A."/>
            <person name="Godsy E."/>
            <person name="Heisel S."/>
            <person name="Houmiel K.L."/>
            <person name="Jhaveri J."/>
            <person name="Lu J."/>
            <person name="Miller N.M."/>
            <person name="Norton S."/>
            <person name="Chen Q."/>
            <person name="Phoolcharoen W."/>
            <person name="Ohlin V."/>
            <person name="Ondrusek D."/>
            <person name="Pride N."/>
            <person name="Stricklin S.L."/>
            <person name="Sun J."/>
            <person name="Wheeler C."/>
            <person name="Wilson L."/>
            <person name="Zhu H."/>
            <person name="Wood D.W."/>
        </authorList>
    </citation>
    <scope>NUCLEOTIDE SEQUENCE [LARGE SCALE GENOMIC DNA]</scope>
    <source>
        <strain>ATCC BAA-846 / DSM 112012 / S4</strain>
    </source>
</reference>